<name>RRG9_YEAS6</name>
<reference key="1">
    <citation type="journal article" date="2008" name="FEMS Yeast Res.">
        <title>Comparative genome analysis of a Saccharomyces cerevisiae wine strain.</title>
        <authorList>
            <person name="Borneman A.R."/>
            <person name="Forgan A.H."/>
            <person name="Pretorius I.S."/>
            <person name="Chambers P.J."/>
        </authorList>
    </citation>
    <scope>NUCLEOTIDE SEQUENCE [LARGE SCALE GENOMIC DNA]</scope>
    <source>
        <strain>AWRI1631</strain>
    </source>
</reference>
<keyword id="KW-0496">Mitochondrion</keyword>
<keyword id="KW-0809">Transit peptide</keyword>
<evidence type="ECO:0000250" key="1"/>
<evidence type="ECO:0000255" key="2"/>
<evidence type="ECO:0000305" key="3"/>
<protein>
    <recommendedName>
        <fullName>Required for respiratory growth protein 9, mitochondrial</fullName>
    </recommendedName>
</protein>
<sequence>MNILRIACRSFHCLRCGPLLNENRGWSSKKIIKLVNKSSLSNKEFTEKVRDGTKDIPEWKKQKMAVRKKLQGQRWNPPKKISQEQMEALRLLKFNFPELTASDLADRFKISPEAVRRILKSNWKRTDEENNNTYERWKRRGERIKEMYQRKEDADFVSNQIVTSRKIILGSNSNSPELIARNVRTFKPFKPNNSTPEKKNTNKLYILKHLGSKQ</sequence>
<comment type="function">
    <text evidence="1">Required for respiratory activity and maintenance and expression of the mitochondrial genome.</text>
</comment>
<comment type="subcellular location">
    <subcellularLocation>
        <location evidence="1">Mitochondrion</location>
    </subcellularLocation>
</comment>
<comment type="similarity">
    <text evidence="3">Belongs to the RRG9 family.</text>
</comment>
<proteinExistence type="inferred from homology"/>
<feature type="transit peptide" description="Mitochondrion" evidence="2">
    <location>
        <begin position="1"/>
        <end position="18"/>
    </location>
</feature>
<feature type="chain" id="PRO_0000407972" description="Required for respiratory growth protein 9, mitochondrial">
    <location>
        <begin position="19"/>
        <end position="214"/>
    </location>
</feature>
<dbReference type="EMBL" id="ABSV01001973">
    <property type="protein sequence ID" value="EDZ69797.1"/>
    <property type="molecule type" value="Genomic_DNA"/>
</dbReference>
<dbReference type="SMR" id="B5VQJ9"/>
<dbReference type="Proteomes" id="UP000008988">
    <property type="component" value="Unassembled WGS sequence"/>
</dbReference>
<dbReference type="GO" id="GO:0005739">
    <property type="term" value="C:mitochondrion"/>
    <property type="evidence" value="ECO:0007669"/>
    <property type="project" value="UniProtKB-SubCell"/>
</dbReference>
<dbReference type="GO" id="GO:0005634">
    <property type="term" value="C:nucleus"/>
    <property type="evidence" value="ECO:0007669"/>
    <property type="project" value="TreeGrafter"/>
</dbReference>
<dbReference type="InterPro" id="IPR010487">
    <property type="entry name" value="NGRN/Rrg9"/>
</dbReference>
<dbReference type="PANTHER" id="PTHR13475">
    <property type="entry name" value="NEUGRIN"/>
    <property type="match status" value="1"/>
</dbReference>
<dbReference type="PANTHER" id="PTHR13475:SF3">
    <property type="entry name" value="NEUGRIN"/>
    <property type="match status" value="1"/>
</dbReference>
<dbReference type="Pfam" id="PF06413">
    <property type="entry name" value="Neugrin"/>
    <property type="match status" value="1"/>
</dbReference>
<accession>B5VQJ9</accession>
<gene>
    <name type="primary">RRG9</name>
    <name type="ORF">AWRI1631_141190</name>
</gene>
<organism>
    <name type="scientific">Saccharomyces cerevisiae (strain AWRI1631)</name>
    <name type="common">Baker's yeast</name>
    <dbReference type="NCBI Taxonomy" id="545124"/>
    <lineage>
        <taxon>Eukaryota</taxon>
        <taxon>Fungi</taxon>
        <taxon>Dikarya</taxon>
        <taxon>Ascomycota</taxon>
        <taxon>Saccharomycotina</taxon>
        <taxon>Saccharomycetes</taxon>
        <taxon>Saccharomycetales</taxon>
        <taxon>Saccharomycetaceae</taxon>
        <taxon>Saccharomyces</taxon>
    </lineage>
</organism>